<reference key="1">
    <citation type="journal article" date="1999" name="Genomics">
        <title>Identification of a novel homolog of the Drosophila staufen protein in the chromosome 8q13-q21.1 region.</title>
        <authorList>
            <person name="Buchner G."/>
            <person name="Bassi M.T."/>
            <person name="Andolfi G."/>
            <person name="Ballabio A."/>
            <person name="Franco B."/>
        </authorList>
    </citation>
    <scope>NUCLEOTIDE SEQUENCE [MRNA] (ISOFORM 3)</scope>
    <scope>VARIANT MET-198</scope>
</reference>
<reference key="2">
    <citation type="journal article" date="2002" name="J. Cell Sci.">
        <title>Staufen2 isoforms localize to the somatodendritic domain of neurons and interact with different organelles.</title>
        <authorList>
            <person name="Duchaine T.F."/>
            <person name="Hemraj I."/>
            <person name="Furic L."/>
            <person name="Deitinghoff A."/>
            <person name="Kiebler M.A."/>
            <person name="DesGroseillers L."/>
        </authorList>
    </citation>
    <scope>NUCLEOTIDE SEQUENCE [MRNA] (ISOFORMS 1 AND 2)</scope>
    <scope>VARIANT MET-198</scope>
</reference>
<reference key="3">
    <citation type="journal article" date="2004" name="Nat. Genet.">
        <title>Complete sequencing and characterization of 21,243 full-length human cDNAs.</title>
        <authorList>
            <person name="Ota T."/>
            <person name="Suzuki Y."/>
            <person name="Nishikawa T."/>
            <person name="Otsuki T."/>
            <person name="Sugiyama T."/>
            <person name="Irie R."/>
            <person name="Wakamatsu A."/>
            <person name="Hayashi K."/>
            <person name="Sato H."/>
            <person name="Nagai K."/>
            <person name="Kimura K."/>
            <person name="Makita H."/>
            <person name="Sekine M."/>
            <person name="Obayashi M."/>
            <person name="Nishi T."/>
            <person name="Shibahara T."/>
            <person name="Tanaka T."/>
            <person name="Ishii S."/>
            <person name="Yamamoto J."/>
            <person name="Saito K."/>
            <person name="Kawai Y."/>
            <person name="Isono Y."/>
            <person name="Nakamura Y."/>
            <person name="Nagahari K."/>
            <person name="Murakami K."/>
            <person name="Yasuda T."/>
            <person name="Iwayanagi T."/>
            <person name="Wagatsuma M."/>
            <person name="Shiratori A."/>
            <person name="Sudo H."/>
            <person name="Hosoiri T."/>
            <person name="Kaku Y."/>
            <person name="Kodaira H."/>
            <person name="Kondo H."/>
            <person name="Sugawara M."/>
            <person name="Takahashi M."/>
            <person name="Kanda K."/>
            <person name="Yokoi T."/>
            <person name="Furuya T."/>
            <person name="Kikkawa E."/>
            <person name="Omura Y."/>
            <person name="Abe K."/>
            <person name="Kamihara K."/>
            <person name="Katsuta N."/>
            <person name="Sato K."/>
            <person name="Tanikawa M."/>
            <person name="Yamazaki M."/>
            <person name="Ninomiya K."/>
            <person name="Ishibashi T."/>
            <person name="Yamashita H."/>
            <person name="Murakawa K."/>
            <person name="Fujimori K."/>
            <person name="Tanai H."/>
            <person name="Kimata M."/>
            <person name="Watanabe M."/>
            <person name="Hiraoka S."/>
            <person name="Chiba Y."/>
            <person name="Ishida S."/>
            <person name="Ono Y."/>
            <person name="Takiguchi S."/>
            <person name="Watanabe S."/>
            <person name="Yosida M."/>
            <person name="Hotuta T."/>
            <person name="Kusano J."/>
            <person name="Kanehori K."/>
            <person name="Takahashi-Fujii A."/>
            <person name="Hara H."/>
            <person name="Tanase T.-O."/>
            <person name="Nomura Y."/>
            <person name="Togiya S."/>
            <person name="Komai F."/>
            <person name="Hara R."/>
            <person name="Takeuchi K."/>
            <person name="Arita M."/>
            <person name="Imose N."/>
            <person name="Musashino K."/>
            <person name="Yuuki H."/>
            <person name="Oshima A."/>
            <person name="Sasaki N."/>
            <person name="Aotsuka S."/>
            <person name="Yoshikawa Y."/>
            <person name="Matsunawa H."/>
            <person name="Ichihara T."/>
            <person name="Shiohata N."/>
            <person name="Sano S."/>
            <person name="Moriya S."/>
            <person name="Momiyama H."/>
            <person name="Satoh N."/>
            <person name="Takami S."/>
            <person name="Terashima Y."/>
            <person name="Suzuki O."/>
            <person name="Nakagawa S."/>
            <person name="Senoh A."/>
            <person name="Mizoguchi H."/>
            <person name="Goto Y."/>
            <person name="Shimizu F."/>
            <person name="Wakebe H."/>
            <person name="Hishigaki H."/>
            <person name="Watanabe T."/>
            <person name="Sugiyama A."/>
            <person name="Takemoto M."/>
            <person name="Kawakami B."/>
            <person name="Yamazaki M."/>
            <person name="Watanabe K."/>
            <person name="Kumagai A."/>
            <person name="Itakura S."/>
            <person name="Fukuzumi Y."/>
            <person name="Fujimori Y."/>
            <person name="Komiyama M."/>
            <person name="Tashiro H."/>
            <person name="Tanigami A."/>
            <person name="Fujiwara T."/>
            <person name="Ono T."/>
            <person name="Yamada K."/>
            <person name="Fujii Y."/>
            <person name="Ozaki K."/>
            <person name="Hirao M."/>
            <person name="Ohmori Y."/>
            <person name="Kawabata A."/>
            <person name="Hikiji T."/>
            <person name="Kobatake N."/>
            <person name="Inagaki H."/>
            <person name="Ikema Y."/>
            <person name="Okamoto S."/>
            <person name="Okitani R."/>
            <person name="Kawakami T."/>
            <person name="Noguchi S."/>
            <person name="Itoh T."/>
            <person name="Shigeta K."/>
            <person name="Senba T."/>
            <person name="Matsumura K."/>
            <person name="Nakajima Y."/>
            <person name="Mizuno T."/>
            <person name="Morinaga M."/>
            <person name="Sasaki M."/>
            <person name="Togashi T."/>
            <person name="Oyama M."/>
            <person name="Hata H."/>
            <person name="Watanabe M."/>
            <person name="Komatsu T."/>
            <person name="Mizushima-Sugano J."/>
            <person name="Satoh T."/>
            <person name="Shirai Y."/>
            <person name="Takahashi Y."/>
            <person name="Nakagawa K."/>
            <person name="Okumura K."/>
            <person name="Nagase T."/>
            <person name="Nomura N."/>
            <person name="Kikuchi H."/>
            <person name="Masuho Y."/>
            <person name="Yamashita R."/>
            <person name="Nakai K."/>
            <person name="Yada T."/>
            <person name="Nakamura Y."/>
            <person name="Ohara O."/>
            <person name="Isogai T."/>
            <person name="Sugano S."/>
        </authorList>
    </citation>
    <scope>NUCLEOTIDE SEQUENCE [LARGE SCALE MRNA] (ISOFORMS 1; 6; 7 AND 8)</scope>
    <scope>NUCLEOTIDE SEQUENCE [LARGE SCALE MRNA] OF 256-570 (ISOFORMS 3/4)</scope>
    <scope>VARIANT MET-198</scope>
    <source>
        <tissue>Amygdala</tissue>
        <tissue>Cerebellum</tissue>
        <tissue>Ovary</tissue>
        <tissue>Placenta</tissue>
        <tissue>Teratocarcinoma</tissue>
        <tissue>Thymus</tissue>
    </source>
</reference>
<reference key="4">
    <citation type="journal article" date="2007" name="BMC Genomics">
        <title>The full-ORF clone resource of the German cDNA consortium.</title>
        <authorList>
            <person name="Bechtel S."/>
            <person name="Rosenfelder H."/>
            <person name="Duda A."/>
            <person name="Schmidt C.P."/>
            <person name="Ernst U."/>
            <person name="Wellenreuther R."/>
            <person name="Mehrle A."/>
            <person name="Schuster C."/>
            <person name="Bahr A."/>
            <person name="Bloecker H."/>
            <person name="Heubner D."/>
            <person name="Hoerlein A."/>
            <person name="Michel G."/>
            <person name="Wedler H."/>
            <person name="Koehrer K."/>
            <person name="Ottenwaelder B."/>
            <person name="Poustka A."/>
            <person name="Wiemann S."/>
            <person name="Schupp I."/>
        </authorList>
    </citation>
    <scope>NUCLEOTIDE SEQUENCE [LARGE SCALE MRNA] (ISOFORM 4)</scope>
    <scope>VARIANT MET-198</scope>
    <source>
        <tissue>Retina</tissue>
    </source>
</reference>
<reference key="5">
    <citation type="journal article" date="2006" name="Nature">
        <title>DNA sequence and analysis of human chromosome 8.</title>
        <authorList>
            <person name="Nusbaum C."/>
            <person name="Mikkelsen T.S."/>
            <person name="Zody M.C."/>
            <person name="Asakawa S."/>
            <person name="Taudien S."/>
            <person name="Garber M."/>
            <person name="Kodira C.D."/>
            <person name="Schueler M.G."/>
            <person name="Shimizu A."/>
            <person name="Whittaker C.A."/>
            <person name="Chang J.L."/>
            <person name="Cuomo C.A."/>
            <person name="Dewar K."/>
            <person name="FitzGerald M.G."/>
            <person name="Yang X."/>
            <person name="Allen N.R."/>
            <person name="Anderson S."/>
            <person name="Asakawa T."/>
            <person name="Blechschmidt K."/>
            <person name="Bloom T."/>
            <person name="Borowsky M.L."/>
            <person name="Butler J."/>
            <person name="Cook A."/>
            <person name="Corum B."/>
            <person name="DeArellano K."/>
            <person name="DeCaprio D."/>
            <person name="Dooley K.T."/>
            <person name="Dorris L. III"/>
            <person name="Engels R."/>
            <person name="Gloeckner G."/>
            <person name="Hafez N."/>
            <person name="Hagopian D.S."/>
            <person name="Hall J.L."/>
            <person name="Ishikawa S.K."/>
            <person name="Jaffe D.B."/>
            <person name="Kamat A."/>
            <person name="Kudoh J."/>
            <person name="Lehmann R."/>
            <person name="Lokitsang T."/>
            <person name="Macdonald P."/>
            <person name="Major J.E."/>
            <person name="Matthews C.D."/>
            <person name="Mauceli E."/>
            <person name="Menzel U."/>
            <person name="Mihalev A.H."/>
            <person name="Minoshima S."/>
            <person name="Murayama Y."/>
            <person name="Naylor J.W."/>
            <person name="Nicol R."/>
            <person name="Nguyen C."/>
            <person name="O'Leary S.B."/>
            <person name="O'Neill K."/>
            <person name="Parker S.C.J."/>
            <person name="Polley A."/>
            <person name="Raymond C.K."/>
            <person name="Reichwald K."/>
            <person name="Rodriguez J."/>
            <person name="Sasaki T."/>
            <person name="Schilhabel M."/>
            <person name="Siddiqui R."/>
            <person name="Smith C.L."/>
            <person name="Sneddon T.P."/>
            <person name="Talamas J.A."/>
            <person name="Tenzin P."/>
            <person name="Topham K."/>
            <person name="Venkataraman V."/>
            <person name="Wen G."/>
            <person name="Yamazaki S."/>
            <person name="Young S.K."/>
            <person name="Zeng Q."/>
            <person name="Zimmer A.R."/>
            <person name="Rosenthal A."/>
            <person name="Birren B.W."/>
            <person name="Platzer M."/>
            <person name="Shimizu N."/>
            <person name="Lander E.S."/>
        </authorList>
    </citation>
    <scope>NUCLEOTIDE SEQUENCE [LARGE SCALE GENOMIC DNA]</scope>
    <scope>VARIANT MET-198</scope>
</reference>
<reference key="6">
    <citation type="journal article" date="2004" name="Genome Res.">
        <title>The status, quality, and expansion of the NIH full-length cDNA project: the Mammalian Gene Collection (MGC).</title>
        <authorList>
            <consortium name="The MGC Project Team"/>
        </authorList>
    </citation>
    <scope>NUCLEOTIDE SEQUENCE [LARGE SCALE MRNA] (ISOFORMS 2 AND 5)</scope>
    <scope>VARIANT MET-198</scope>
    <source>
        <tissue>Urinary bladder carcinoma</tissue>
    </source>
</reference>
<reference key="7">
    <citation type="journal article" date="2006" name="Nat. Biotechnol.">
        <title>A probability-based approach for high-throughput protein phosphorylation analysis and site localization.</title>
        <authorList>
            <person name="Beausoleil S.A."/>
            <person name="Villen J."/>
            <person name="Gerber S.A."/>
            <person name="Rush J."/>
            <person name="Gygi S.P."/>
        </authorList>
    </citation>
    <scope>PHOSPHORYLATION [LARGE SCALE ANALYSIS] AT SER-440</scope>
    <scope>IDENTIFICATION BY MASS SPECTROMETRY [LARGE SCALE ANALYSIS]</scope>
    <source>
        <tissue>Cervix carcinoma</tissue>
    </source>
</reference>
<reference key="8">
    <citation type="journal article" date="2008" name="J. Proteome Res.">
        <title>Combining protein-based IMAC, peptide-based IMAC, and MudPIT for efficient phosphoproteomic analysis.</title>
        <authorList>
            <person name="Cantin G.T."/>
            <person name="Yi W."/>
            <person name="Lu B."/>
            <person name="Park S.K."/>
            <person name="Xu T."/>
            <person name="Lee J.-D."/>
            <person name="Yates J.R. III"/>
        </authorList>
    </citation>
    <scope>PHOSPHORYLATION [LARGE SCALE ANALYSIS] AT SER-416</scope>
    <scope>IDENTIFICATION BY MASS SPECTROMETRY [LARGE SCALE ANALYSIS]</scope>
    <source>
        <tissue>Cervix carcinoma</tissue>
    </source>
</reference>
<reference key="9">
    <citation type="journal article" date="2008" name="Mol. Cell">
        <title>Kinase-selective enrichment enables quantitative phosphoproteomics of the kinome across the cell cycle.</title>
        <authorList>
            <person name="Daub H."/>
            <person name="Olsen J.V."/>
            <person name="Bairlein M."/>
            <person name="Gnad F."/>
            <person name="Oppermann F.S."/>
            <person name="Korner R."/>
            <person name="Greff Z."/>
            <person name="Keri G."/>
            <person name="Stemmann O."/>
            <person name="Mann M."/>
        </authorList>
    </citation>
    <scope>PHOSPHORYLATION [LARGE SCALE ANALYSIS] AT SER-188 AND SER-416</scope>
    <scope>IDENTIFICATION BY MASS SPECTROMETRY [LARGE SCALE ANALYSIS]</scope>
    <source>
        <tissue>Cervix carcinoma</tissue>
    </source>
</reference>
<reference key="10">
    <citation type="journal article" date="2008" name="Proc. Natl. Acad. Sci. U.S.A.">
        <title>A quantitative atlas of mitotic phosphorylation.</title>
        <authorList>
            <person name="Dephoure N."/>
            <person name="Zhou C."/>
            <person name="Villen J."/>
            <person name="Beausoleil S.A."/>
            <person name="Bakalarski C.E."/>
            <person name="Elledge S.J."/>
            <person name="Gygi S.P."/>
        </authorList>
    </citation>
    <scope>PHOSPHORYLATION [LARGE SCALE ANALYSIS] AT SER-416; SER-440; SER-455 AND SER-492</scope>
    <scope>IDENTIFICATION BY MASS SPECTROMETRY [LARGE SCALE ANALYSIS]</scope>
    <source>
        <tissue>Cervix carcinoma</tissue>
    </source>
</reference>
<reference key="11">
    <citation type="journal article" date="2009" name="Anal. Chem.">
        <title>Lys-N and trypsin cover complementary parts of the phosphoproteome in a refined SCX-based approach.</title>
        <authorList>
            <person name="Gauci S."/>
            <person name="Helbig A.O."/>
            <person name="Slijper M."/>
            <person name="Krijgsveld J."/>
            <person name="Heck A.J."/>
            <person name="Mohammed S."/>
        </authorList>
    </citation>
    <scope>IDENTIFICATION BY MASS SPECTROMETRY [LARGE SCALE ANALYSIS]</scope>
</reference>
<reference key="12">
    <citation type="journal article" date="2009" name="RNA">
        <title>Control of c-myc mRNA stability by IGF2BP1-associated cytoplasmic RNPs.</title>
        <authorList>
            <person name="Weidensdorfer D."/>
            <person name="Stoehr N."/>
            <person name="Baude A."/>
            <person name="Lederer M."/>
            <person name="Koehn M."/>
            <person name="Schierhorn A."/>
            <person name="Buchmeier S."/>
            <person name="Wahle E."/>
            <person name="Huettelmaiery S."/>
        </authorList>
    </citation>
    <scope>IDENTIFICATION IN A MRNP COMPLEX</scope>
    <scope>IDENTIFICATION BY MASS SPECTROMETRY</scope>
</reference>
<reference key="13">
    <citation type="journal article" date="2009" name="Sci. Signal.">
        <title>Quantitative phosphoproteomic analysis of T cell receptor signaling reveals system-wide modulation of protein-protein interactions.</title>
        <authorList>
            <person name="Mayya V."/>
            <person name="Lundgren D.H."/>
            <person name="Hwang S.-I."/>
            <person name="Rezaul K."/>
            <person name="Wu L."/>
            <person name="Eng J.K."/>
            <person name="Rodionov V."/>
            <person name="Han D.K."/>
        </authorList>
    </citation>
    <scope>PHOSPHORYLATION [LARGE SCALE ANALYSIS] AT SER-440 AND SER-492</scope>
    <scope>IDENTIFICATION BY MASS SPECTROMETRY [LARGE SCALE ANALYSIS]</scope>
    <source>
        <tissue>Leukemic T-cell</tissue>
    </source>
</reference>
<reference key="14">
    <citation type="journal article" date="2010" name="Sci. Signal.">
        <title>Quantitative phosphoproteomics reveals widespread full phosphorylation site occupancy during mitosis.</title>
        <authorList>
            <person name="Olsen J.V."/>
            <person name="Vermeulen M."/>
            <person name="Santamaria A."/>
            <person name="Kumar C."/>
            <person name="Miller M.L."/>
            <person name="Jensen L.J."/>
            <person name="Gnad F."/>
            <person name="Cox J."/>
            <person name="Jensen T.S."/>
            <person name="Nigg E.A."/>
            <person name="Brunak S."/>
            <person name="Mann M."/>
        </authorList>
    </citation>
    <scope>PHOSPHORYLATION [LARGE SCALE ANALYSIS] AT SER-395; THR-405; SER-416; SER-426; SER-440 AND SER-455</scope>
    <scope>IDENTIFICATION BY MASS SPECTROMETRY [LARGE SCALE ANALYSIS]</scope>
    <source>
        <tissue>Cervix carcinoma</tissue>
    </source>
</reference>
<reference key="15">
    <citation type="journal article" date="2011" name="BMC Syst. Biol.">
        <title>Initial characterization of the human central proteome.</title>
        <authorList>
            <person name="Burkard T.R."/>
            <person name="Planyavsky M."/>
            <person name="Kaupe I."/>
            <person name="Breitwieser F.P."/>
            <person name="Buerckstuemmer T."/>
            <person name="Bennett K.L."/>
            <person name="Superti-Furga G."/>
            <person name="Colinge J."/>
        </authorList>
    </citation>
    <scope>IDENTIFICATION BY MASS SPECTROMETRY [LARGE SCALE ANALYSIS]</scope>
</reference>
<reference key="16">
    <citation type="journal article" date="2011" name="Sci. Signal.">
        <title>System-wide temporal characterization of the proteome and phosphoproteome of human embryonic stem cell differentiation.</title>
        <authorList>
            <person name="Rigbolt K.T."/>
            <person name="Prokhorova T.A."/>
            <person name="Akimov V."/>
            <person name="Henningsen J."/>
            <person name="Johansen P.T."/>
            <person name="Kratchmarova I."/>
            <person name="Kassem M."/>
            <person name="Mann M."/>
            <person name="Olsen J.V."/>
            <person name="Blagoev B."/>
        </authorList>
    </citation>
    <scope>PHOSPHORYLATION [LARGE SCALE ANALYSIS] AT SER-188</scope>
    <scope>IDENTIFICATION BY MASS SPECTROMETRY [LARGE SCALE ANALYSIS]</scope>
</reference>
<reference key="17">
    <citation type="journal article" date="2013" name="J. Proteome Res.">
        <title>Toward a comprehensive characterization of a human cancer cell phosphoproteome.</title>
        <authorList>
            <person name="Zhou H."/>
            <person name="Di Palma S."/>
            <person name="Preisinger C."/>
            <person name="Peng M."/>
            <person name="Polat A.N."/>
            <person name="Heck A.J."/>
            <person name="Mohammed S."/>
        </authorList>
    </citation>
    <scope>PHOSPHORYLATION [LARGE SCALE ANALYSIS] AT SER-416; SER-440 AND SER-455</scope>
    <scope>IDENTIFICATION BY MASS SPECTROMETRY [LARGE SCALE ANALYSIS]</scope>
    <source>
        <tissue>Cervix carcinoma</tissue>
        <tissue>Erythroleukemia</tissue>
    </source>
</reference>
<reference key="18">
    <citation type="journal article" date="2013" name="Nucleic Acids Res.">
        <title>The mammalian TRIM-NHL protein TRIM71/LIN-41 is a repressor of mRNA function.</title>
        <authorList>
            <person name="Loedige I."/>
            <person name="Gaidatzis D."/>
            <person name="Sack R."/>
            <person name="Meister G."/>
            <person name="Filipowicz W."/>
        </authorList>
    </citation>
    <scope>INTERACTION WITH TRIM71</scope>
</reference>
<protein>
    <recommendedName>
        <fullName>Double-stranded RNA-binding protein Staufen homolog 2</fullName>
    </recommendedName>
</protein>
<proteinExistence type="evidence at protein level"/>
<organism>
    <name type="scientific">Homo sapiens</name>
    <name type="common">Human</name>
    <dbReference type="NCBI Taxonomy" id="9606"/>
    <lineage>
        <taxon>Eukaryota</taxon>
        <taxon>Metazoa</taxon>
        <taxon>Chordata</taxon>
        <taxon>Craniata</taxon>
        <taxon>Vertebrata</taxon>
        <taxon>Euteleostomi</taxon>
        <taxon>Mammalia</taxon>
        <taxon>Eutheria</taxon>
        <taxon>Euarchontoglires</taxon>
        <taxon>Primates</taxon>
        <taxon>Haplorrhini</taxon>
        <taxon>Catarrhini</taxon>
        <taxon>Hominidae</taxon>
        <taxon>Homo</taxon>
    </lineage>
</organism>
<keyword id="KW-0025">Alternative splicing</keyword>
<keyword id="KW-0963">Cytoplasm</keyword>
<keyword id="KW-0256">Endoplasmic reticulum</keyword>
<keyword id="KW-0493">Microtubule</keyword>
<keyword id="KW-0539">Nucleus</keyword>
<keyword id="KW-0597">Phosphoprotein</keyword>
<keyword id="KW-1267">Proteomics identification</keyword>
<keyword id="KW-1185">Reference proteome</keyword>
<keyword id="KW-0677">Repeat</keyword>
<keyword id="KW-0694">RNA-binding</keyword>
<keyword id="KW-0813">Transport</keyword>
<comment type="function">
    <text evidence="2">RNA-binding protein required for the microtubule-dependent transport of neuronal RNA from the cell body to the dendrite. As protein synthesis occurs within the dendrite, the localization of specific mRNAs to dendrites may be a prerequisite for neurite outgrowth and plasticity at sites distant from the cell body (By similarity).</text>
</comment>
<comment type="subunit">
    <text evidence="2 10 11">Interacts with the exportin XPO5. This requires RNA and RAN bound to GTP. Interacts with microtubules. Isoform 2 and isoform 3 may also interact with ribosomes, and this association is independent of translation (By similarity). Identified in a mRNP complex, at least composed of DHX9, DDX3X, ELAVL1, HNRNPU, IGF2BP1, ILF3, PABPC1, PCBP2, PTBP2, STAU1, STAU2, SYNCRIP and YBX1. Interacts with TRIM71 (via NHL repeats) in an RNA-dependent manner (PubMed:23125361).</text>
</comment>
<comment type="interaction">
    <interactant intactId="EBI-722938">
        <id>Q9NUL3</id>
    </interactant>
    <interactant intactId="EBI-744193">
        <id>Q96C10</id>
        <label>DHX58</label>
    </interactant>
    <organismsDiffer>false</organismsDiffer>
    <experiments>2</experiments>
</comment>
<comment type="interaction">
    <interactant intactId="EBI-722938">
        <id>Q9NUL3</id>
    </interactant>
    <interactant intactId="EBI-640775">
        <id>P19525</id>
        <label>EIF2AK2</label>
    </interactant>
    <organismsDiffer>false</organismsDiffer>
    <experiments>3</experiments>
</comment>
<comment type="interaction">
    <interactant intactId="EBI-722938">
        <id>Q9NUL3</id>
    </interactant>
    <interactant intactId="EBI-25475859">
        <id>PRO_0000449620</id>
        <label>rep</label>
        <dbReference type="UniProtKB" id="P0DTD1"/>
    </interactant>
    <organismsDiffer>true</organismsDiffer>
    <experiments>2</experiments>
</comment>
<comment type="subcellular location">
    <subcellularLocation>
        <location>Cytoplasm</location>
    </subcellularLocation>
    <subcellularLocation>
        <location>Nucleus</location>
    </subcellularLocation>
    <subcellularLocation>
        <location>Nucleus</location>
        <location>Nucleolus</location>
    </subcellularLocation>
    <subcellularLocation>
        <location>Endoplasmic reticulum</location>
    </subcellularLocation>
    <text evidence="1">Shuttles between the nucleolus, nucleus and the cytoplasm. Nuclear export of isoform 1 is independent of XPO1/CRM1 and requires the exportin XPO5. Nuclear export of isoform 2 and isoform 3 can occur by both XPO1/CRM1-dependent and XPO1/CRM1-independent pathways. Found in large cytoplasmic ribonucleoprotein (RNP) granules which are present in the actin rich regions of myelinating processes and associated with microtubules, polysomes and the endoplasmic reticulum. Also recruited to stress granules (SGs) upon inhibition of translation or oxidative stress. These structures are thought to harbor housekeeping mRNAs when translation is aborted (By similarity).</text>
</comment>
<comment type="alternative products">
    <event type="alternative splicing"/>
    <isoform>
        <id>Q9NUL3-1</id>
        <name>1</name>
        <name>Long</name>
        <sequence type="displayed"/>
    </isoform>
    <isoform>
        <id>Q9NUL3-2</id>
        <name>2</name>
        <name>Short</name>
        <sequence type="described" ref="VSP_015374"/>
    </isoform>
    <isoform>
        <id>Q9NUL3-3</id>
        <name>3</name>
        <sequence type="described" ref="VSP_015374 VSP_015376 VSP_015377"/>
    </isoform>
    <isoform>
        <id>Q9NUL3-4</id>
        <name>4</name>
        <sequence type="described" ref="VSP_015373 VSP_015376 VSP_015377"/>
    </isoform>
    <isoform>
        <id>Q9NUL3-5</id>
        <name>5</name>
        <sequence type="described" ref="VSP_015374 VSP_015375"/>
    </isoform>
    <isoform>
        <id>Q9NUL3-6</id>
        <name>6</name>
        <sequence type="described" ref="VSP_046138"/>
    </isoform>
    <isoform>
        <id>Q9NUL3-7</id>
        <name>7</name>
        <sequence type="described" ref="VSP_046139 VSP_046141"/>
    </isoform>
    <isoform>
        <id>Q9NUL3-8</id>
        <name>8</name>
        <sequence type="described" ref="VSP_046140 VSP_046142"/>
    </isoform>
</comment>
<comment type="domain">
    <text evidence="1">The DRBM 3 domain appears to be the major RNA-binding determinant. This domain also mediates interaction with XPO5 and is required for XPO1/CRM1-independent nuclear export (By similarity).</text>
</comment>
<comment type="sequence caution" evidence="17">
    <conflict type="erroneous initiation">
        <sequence resource="EMBL-CDS" id="BAA91766"/>
    </conflict>
    <text>Truncated N-terminus.</text>
</comment>
<comment type="sequence caution" evidence="17">
    <conflict type="erroneous initiation">
        <sequence resource="EMBL-CDS" id="BAB14522"/>
    </conflict>
    <text>Truncated N-terminus.</text>
</comment>
<comment type="sequence caution" evidence="17">
    <conflict type="erroneous initiation">
        <sequence resource="EMBL-CDS" id="CAH10527"/>
    </conflict>
    <text>Extended N-terminus.</text>
</comment>
<accession>Q9NUL3</accession>
<accession>A0A0A0MTC5</accession>
<accession>B7Z1I6</accession>
<accession>B7Z292</accession>
<accession>B7Z8B4</accession>
<accession>E7ER74</accession>
<accession>E9PEI3</accession>
<accession>E9PF26</accession>
<accession>E9PF50</accession>
<accession>Q6AHY7</accession>
<accession>Q96HM0</accession>
<accession>Q96HM1</accession>
<accession>Q9NVI5</accession>
<accession>Q9UGG6</accession>
<evidence type="ECO:0000250" key="1"/>
<evidence type="ECO:0000250" key="2">
    <source>
        <dbReference type="UniProtKB" id="Q68SB1"/>
    </source>
</evidence>
<evidence type="ECO:0000255" key="3">
    <source>
        <dbReference type="PROSITE-ProRule" id="PRU00266"/>
    </source>
</evidence>
<evidence type="ECO:0000256" key="4">
    <source>
        <dbReference type="SAM" id="MobiDB-lite"/>
    </source>
</evidence>
<evidence type="ECO:0000269" key="5">
    <source>
    </source>
</evidence>
<evidence type="ECO:0000269" key="6">
    <source>
    </source>
</evidence>
<evidence type="ECO:0000269" key="7">
    <source>
    </source>
</evidence>
<evidence type="ECO:0000269" key="8">
    <source>
    </source>
</evidence>
<evidence type="ECO:0000269" key="9">
    <source>
    </source>
</evidence>
<evidence type="ECO:0000269" key="10">
    <source>
    </source>
</evidence>
<evidence type="ECO:0000269" key="11">
    <source>
    </source>
</evidence>
<evidence type="ECO:0000303" key="12">
    <source>
    </source>
</evidence>
<evidence type="ECO:0000303" key="13">
    <source>
    </source>
</evidence>
<evidence type="ECO:0000303" key="14">
    <source>
    </source>
</evidence>
<evidence type="ECO:0000303" key="15">
    <source>
    </source>
</evidence>
<evidence type="ECO:0000303" key="16">
    <source>
    </source>
</evidence>
<evidence type="ECO:0000305" key="17"/>
<evidence type="ECO:0007744" key="18">
    <source>
    </source>
</evidence>
<evidence type="ECO:0007744" key="19">
    <source>
    </source>
</evidence>
<evidence type="ECO:0007744" key="20">
    <source>
    </source>
</evidence>
<evidence type="ECO:0007744" key="21">
    <source>
    </source>
</evidence>
<evidence type="ECO:0007744" key="22">
    <source>
    </source>
</evidence>
<evidence type="ECO:0007744" key="23">
    <source>
    </source>
</evidence>
<evidence type="ECO:0007744" key="24">
    <source>
    </source>
</evidence>
<evidence type="ECO:0007744" key="25">
    <source>
    </source>
</evidence>
<gene>
    <name type="primary">STAU2</name>
</gene>
<name>STAU2_HUMAN</name>
<sequence length="570" mass="62608">MANPKEKTAMCLVNELARFNRVQPQYKLLNERGPAHSKMFSVQLSLGEQTWESEGSSIKKAQQAVANKALTESTLPKPVQKPPKSNVNNNPGSITPTVELNGLAMKRGEPAIYRPLDPKPFPNYRANYNFRGMYNQRYHCPVPKIFYVQLTVGNNEFFGEGKTRQAARHNAAMKALQALQNEPIPERSPQNGESGKDVDDDKDANKSEISLVFEIALKRNMPVSFEVIKESGPPHMKSFVTRVSVGEFSAEGEGNSKKLSKKRAATTVLQELKKLPPLPVVEKPKLFFKKRPKTIVKAGPEYGQGMNPISRLAQIQQAKKEKEPDYVLLSERGMPRRREFVMQVKVGNEVATGTGPNKKIAKKNAAEAMLLQLGYKASTNLQDQLEKTGENKGWSGPKPGFPEPTNNTPKGILHLSPDVYQEMEASRHKVISGTTLGYLSPKDMNQPSSSFFSISPTSNSSATIARELLMNGTSSTAEAIGLKGSSPTPPCSPVQPSKQLEYLARIQGFQAALSALKQFSEQGLDPIDGAMNIEKGSLEKQAKHLREKADNNQAPPGSIAQDCKKSNSAV</sequence>
<dbReference type="EMBL" id="Y19062">
    <property type="protein sequence ID" value="CAB64341.1"/>
    <property type="molecule type" value="mRNA"/>
</dbReference>
<dbReference type="EMBL" id="AF459097">
    <property type="protein sequence ID" value="AAN37926.1"/>
    <property type="molecule type" value="mRNA"/>
</dbReference>
<dbReference type="EMBL" id="AF459098">
    <property type="protein sequence ID" value="AAN37927.1"/>
    <property type="molecule type" value="mRNA"/>
</dbReference>
<dbReference type="EMBL" id="AK001576">
    <property type="protein sequence ID" value="BAA91766.1"/>
    <property type="status" value="ALT_INIT"/>
    <property type="molecule type" value="mRNA"/>
</dbReference>
<dbReference type="EMBL" id="AK002152">
    <property type="protein sequence ID" value="BAA92111.1"/>
    <property type="molecule type" value="mRNA"/>
</dbReference>
<dbReference type="EMBL" id="AK023314">
    <property type="protein sequence ID" value="BAB14522.1"/>
    <property type="status" value="ALT_INIT"/>
    <property type="molecule type" value="mRNA"/>
</dbReference>
<dbReference type="EMBL" id="AK293496">
    <property type="protein sequence ID" value="BAH11522.1"/>
    <property type="molecule type" value="mRNA"/>
</dbReference>
<dbReference type="EMBL" id="AK294466">
    <property type="protein sequence ID" value="BAH11778.1"/>
    <property type="molecule type" value="mRNA"/>
</dbReference>
<dbReference type="EMBL" id="AK303104">
    <property type="protein sequence ID" value="BAH13900.1"/>
    <property type="molecule type" value="mRNA"/>
</dbReference>
<dbReference type="EMBL" id="CR627442">
    <property type="protein sequence ID" value="CAH10527.1"/>
    <property type="status" value="ALT_INIT"/>
    <property type="molecule type" value="mRNA"/>
</dbReference>
<dbReference type="EMBL" id="AC018620">
    <property type="status" value="NOT_ANNOTATED_CDS"/>
    <property type="molecule type" value="Genomic_DNA"/>
</dbReference>
<dbReference type="EMBL" id="AC027018">
    <property type="status" value="NOT_ANNOTATED_CDS"/>
    <property type="molecule type" value="Genomic_DNA"/>
</dbReference>
<dbReference type="EMBL" id="AC100784">
    <property type="status" value="NOT_ANNOTATED_CDS"/>
    <property type="molecule type" value="Genomic_DNA"/>
</dbReference>
<dbReference type="EMBL" id="KF458781">
    <property type="status" value="NOT_ANNOTATED_CDS"/>
    <property type="molecule type" value="Genomic_DNA"/>
</dbReference>
<dbReference type="EMBL" id="BC008369">
    <property type="protein sequence ID" value="AAH08369.1"/>
    <property type="molecule type" value="mRNA"/>
</dbReference>
<dbReference type="EMBL" id="BC008370">
    <property type="protein sequence ID" value="AAH08370.1"/>
    <property type="molecule type" value="mRNA"/>
</dbReference>
<dbReference type="CCDS" id="CCDS55244.1">
    <molecule id="Q9NUL3-6"/>
</dbReference>
<dbReference type="CCDS" id="CCDS55245.1">
    <molecule id="Q9NUL3-7"/>
</dbReference>
<dbReference type="CCDS" id="CCDS55246.1">
    <molecule id="Q9NUL3-8"/>
</dbReference>
<dbReference type="CCDS" id="CCDS55247.1">
    <molecule id="Q9NUL3-1"/>
</dbReference>
<dbReference type="CCDS" id="CCDS55248.1">
    <molecule id="Q9NUL3-2"/>
</dbReference>
<dbReference type="CCDS" id="CCDS6214.1">
    <molecule id="Q9NUL3-3"/>
</dbReference>
<dbReference type="RefSeq" id="NP_001157852.1">
    <molecule id="Q9NUL3-1"/>
    <property type="nucleotide sequence ID" value="NM_001164380.2"/>
</dbReference>
<dbReference type="RefSeq" id="NP_001157853.1">
    <molecule id="Q9NUL3-2"/>
    <property type="nucleotide sequence ID" value="NM_001164381.2"/>
</dbReference>
<dbReference type="RefSeq" id="NP_001157854.1">
    <molecule id="Q9NUL3-7"/>
    <property type="nucleotide sequence ID" value="NM_001164382.2"/>
</dbReference>
<dbReference type="RefSeq" id="NP_001157855.1">
    <molecule id="Q9NUL3-6"/>
    <property type="nucleotide sequence ID" value="NM_001164383.2"/>
</dbReference>
<dbReference type="RefSeq" id="NP_001157856.1">
    <molecule id="Q9NUL3-3"/>
    <property type="nucleotide sequence ID" value="NM_001164384.2"/>
</dbReference>
<dbReference type="RefSeq" id="NP_001157857.1">
    <molecule id="Q9NUL3-8"/>
    <property type="nucleotide sequence ID" value="NM_001164385.2"/>
</dbReference>
<dbReference type="RefSeq" id="NP_055208.2">
    <molecule id="Q9NUL3-3"/>
    <property type="nucleotide sequence ID" value="NM_014393.3"/>
</dbReference>
<dbReference type="SMR" id="Q9NUL3"/>
<dbReference type="BioGRID" id="117978">
    <property type="interactions" value="289"/>
</dbReference>
<dbReference type="FunCoup" id="Q9NUL3">
    <property type="interactions" value="1830"/>
</dbReference>
<dbReference type="IntAct" id="Q9NUL3">
    <property type="interactions" value="175"/>
</dbReference>
<dbReference type="MINT" id="Q9NUL3"/>
<dbReference type="STRING" id="9606.ENSP00000428756"/>
<dbReference type="GlyCosmos" id="Q9NUL3">
    <property type="glycosylation" value="1 site, 1 glycan"/>
</dbReference>
<dbReference type="GlyGen" id="Q9NUL3">
    <property type="glycosylation" value="6 sites, 1 N-linked glycan (1 site), 1 O-linked glycan (4 sites)"/>
</dbReference>
<dbReference type="iPTMnet" id="Q9NUL3"/>
<dbReference type="MetOSite" id="Q9NUL3"/>
<dbReference type="PhosphoSitePlus" id="Q9NUL3"/>
<dbReference type="BioMuta" id="STAU2"/>
<dbReference type="DMDM" id="73919458"/>
<dbReference type="jPOST" id="Q9NUL3"/>
<dbReference type="MassIVE" id="Q9NUL3"/>
<dbReference type="PaxDb" id="9606-ENSP00000428756"/>
<dbReference type="PeptideAtlas" id="Q9NUL3"/>
<dbReference type="ProteomicsDB" id="17731"/>
<dbReference type="ProteomicsDB" id="19897"/>
<dbReference type="ProteomicsDB" id="20012"/>
<dbReference type="ProteomicsDB" id="20028"/>
<dbReference type="ProteomicsDB" id="82683">
    <molecule id="Q9NUL3-1"/>
</dbReference>
<dbReference type="ProteomicsDB" id="82684">
    <molecule id="Q9NUL3-2"/>
</dbReference>
<dbReference type="ProteomicsDB" id="82685">
    <molecule id="Q9NUL3-3"/>
</dbReference>
<dbReference type="ProteomicsDB" id="82686">
    <molecule id="Q9NUL3-4"/>
</dbReference>
<dbReference type="ProteomicsDB" id="82687">
    <molecule id="Q9NUL3-5"/>
</dbReference>
<dbReference type="Pumba" id="Q9NUL3"/>
<dbReference type="Antibodypedia" id="1305">
    <property type="antibodies" value="243 antibodies from 25 providers"/>
</dbReference>
<dbReference type="DNASU" id="27067"/>
<dbReference type="Ensembl" id="ENST00000355780.9">
    <molecule id="Q9NUL3-3"/>
    <property type="protein sequence ID" value="ENSP00000348026.5"/>
    <property type="gene ID" value="ENSG00000040341.18"/>
</dbReference>
<dbReference type="Ensembl" id="ENST00000517542.5">
    <molecule id="Q9NUL3-8"/>
    <property type="protein sequence ID" value="ENSP00000431111.1"/>
    <property type="gene ID" value="ENSG00000040341.18"/>
</dbReference>
<dbReference type="Ensembl" id="ENST00000521210.5">
    <molecule id="Q9NUL3-7"/>
    <property type="protein sequence ID" value="ENSP00000429173.1"/>
    <property type="gene ID" value="ENSG00000040341.18"/>
</dbReference>
<dbReference type="Ensembl" id="ENST00000521451.5">
    <molecule id="Q9NUL3-4"/>
    <property type="protein sequence ID" value="ENSP00000428476.1"/>
    <property type="gene ID" value="ENSG00000040341.18"/>
</dbReference>
<dbReference type="Ensembl" id="ENST00000522509.5">
    <molecule id="Q9NUL3-3"/>
    <property type="protein sequence ID" value="ENSP00000427977.1"/>
    <property type="gene ID" value="ENSG00000040341.18"/>
</dbReference>
<dbReference type="Ensembl" id="ENST00000522695.5">
    <molecule id="Q9NUL3-2"/>
    <property type="protein sequence ID" value="ENSP00000428456.1"/>
    <property type="gene ID" value="ENSG00000040341.18"/>
</dbReference>
<dbReference type="Ensembl" id="ENST00000523558.5">
    <molecule id="Q9NUL3-6"/>
    <property type="protein sequence ID" value="ENSP00000428741.1"/>
    <property type="gene ID" value="ENSG00000040341.18"/>
</dbReference>
<dbReference type="Ensembl" id="ENST00000524104.5">
    <molecule id="Q9NUL3-5"/>
    <property type="protein sequence ID" value="ENSP00000430611.1"/>
    <property type="gene ID" value="ENSG00000040341.18"/>
</dbReference>
<dbReference type="Ensembl" id="ENST00000524300.6">
    <molecule id="Q9NUL3-1"/>
    <property type="protein sequence ID" value="ENSP00000428756.1"/>
    <property type="gene ID" value="ENSG00000040341.18"/>
</dbReference>
<dbReference type="GeneID" id="27067"/>
<dbReference type="KEGG" id="hsa:27067"/>
<dbReference type="MANE-Select" id="ENST00000524300.6">
    <property type="protein sequence ID" value="ENSP00000428756.1"/>
    <property type="RefSeq nucleotide sequence ID" value="NM_001164380.2"/>
    <property type="RefSeq protein sequence ID" value="NP_001157852.1"/>
</dbReference>
<dbReference type="UCSC" id="uc003xzs.5">
    <molecule id="Q9NUL3-1"/>
    <property type="organism name" value="human"/>
</dbReference>
<dbReference type="AGR" id="HGNC:11371"/>
<dbReference type="CTD" id="27067"/>
<dbReference type="DisGeNET" id="27067"/>
<dbReference type="GeneCards" id="STAU2"/>
<dbReference type="HGNC" id="HGNC:11371">
    <property type="gene designation" value="STAU2"/>
</dbReference>
<dbReference type="HPA" id="ENSG00000040341">
    <property type="expression patterns" value="Low tissue specificity"/>
</dbReference>
<dbReference type="MIM" id="605920">
    <property type="type" value="gene"/>
</dbReference>
<dbReference type="neXtProt" id="NX_Q9NUL3"/>
<dbReference type="OpenTargets" id="ENSG00000040341"/>
<dbReference type="PharmGKB" id="PA36189"/>
<dbReference type="VEuPathDB" id="HostDB:ENSG00000040341"/>
<dbReference type="eggNOG" id="KOG3732">
    <property type="taxonomic scope" value="Eukaryota"/>
</dbReference>
<dbReference type="GeneTree" id="ENSGT00940000154977"/>
<dbReference type="HOGENOM" id="CLU_162783_0_0_1"/>
<dbReference type="InParanoid" id="Q9NUL3"/>
<dbReference type="OMA" id="PQNITEM"/>
<dbReference type="OrthoDB" id="10037267at2759"/>
<dbReference type="PAN-GO" id="Q9NUL3">
    <property type="GO annotations" value="11 GO annotations based on evolutionary models"/>
</dbReference>
<dbReference type="PhylomeDB" id="Q9NUL3"/>
<dbReference type="TreeFam" id="TF350296"/>
<dbReference type="PathwayCommons" id="Q9NUL3"/>
<dbReference type="SignaLink" id="Q9NUL3"/>
<dbReference type="BioGRID-ORCS" id="27067">
    <property type="hits" value="17 hits in 1168 CRISPR screens"/>
</dbReference>
<dbReference type="CD-CODE" id="232F8A39">
    <property type="entry name" value="P-body"/>
</dbReference>
<dbReference type="CD-CODE" id="DEE660B4">
    <property type="entry name" value="Stress granule"/>
</dbReference>
<dbReference type="ChiTaRS" id="STAU2">
    <property type="organism name" value="human"/>
</dbReference>
<dbReference type="GeneWiki" id="STAU2"/>
<dbReference type="GenomeRNAi" id="27067"/>
<dbReference type="Pharos" id="Q9NUL3">
    <property type="development level" value="Tbio"/>
</dbReference>
<dbReference type="PRO" id="PR:Q9NUL3"/>
<dbReference type="Proteomes" id="UP000005640">
    <property type="component" value="Chromosome 8"/>
</dbReference>
<dbReference type="RNAct" id="Q9NUL3">
    <property type="molecule type" value="protein"/>
</dbReference>
<dbReference type="Bgee" id="ENSG00000040341">
    <property type="expression patterns" value="Expressed in cortical plate and 193 other cell types or tissues"/>
</dbReference>
<dbReference type="ExpressionAtlas" id="Q9NUL3">
    <property type="expression patterns" value="baseline and differential"/>
</dbReference>
<dbReference type="GO" id="GO:0030424">
    <property type="term" value="C:axon"/>
    <property type="evidence" value="ECO:0007669"/>
    <property type="project" value="Ensembl"/>
</dbReference>
<dbReference type="GO" id="GO:0010494">
    <property type="term" value="C:cytoplasmic stress granule"/>
    <property type="evidence" value="ECO:0000318"/>
    <property type="project" value="GO_Central"/>
</dbReference>
<dbReference type="GO" id="GO:0032839">
    <property type="term" value="C:dendrite cytoplasm"/>
    <property type="evidence" value="ECO:0007669"/>
    <property type="project" value="GOC"/>
</dbReference>
<dbReference type="GO" id="GO:0043198">
    <property type="term" value="C:dendritic shaft"/>
    <property type="evidence" value="ECO:0007669"/>
    <property type="project" value="Ensembl"/>
</dbReference>
<dbReference type="GO" id="GO:0005783">
    <property type="term" value="C:endoplasmic reticulum"/>
    <property type="evidence" value="ECO:0007669"/>
    <property type="project" value="UniProtKB-SubCell"/>
</dbReference>
<dbReference type="GO" id="GO:0098978">
    <property type="term" value="C:glutamatergic synapse"/>
    <property type="evidence" value="ECO:0007669"/>
    <property type="project" value="Ensembl"/>
</dbReference>
<dbReference type="GO" id="GO:0016020">
    <property type="term" value="C:membrane"/>
    <property type="evidence" value="ECO:0007005"/>
    <property type="project" value="UniProtKB"/>
</dbReference>
<dbReference type="GO" id="GO:0005874">
    <property type="term" value="C:microtubule"/>
    <property type="evidence" value="ECO:0007669"/>
    <property type="project" value="UniProtKB-KW"/>
</dbReference>
<dbReference type="GO" id="GO:0043005">
    <property type="term" value="C:neuron projection"/>
    <property type="evidence" value="ECO:0000318"/>
    <property type="project" value="GO_Central"/>
</dbReference>
<dbReference type="GO" id="GO:0043025">
    <property type="term" value="C:neuronal cell body"/>
    <property type="evidence" value="ECO:0000318"/>
    <property type="project" value="GO_Central"/>
</dbReference>
<dbReference type="GO" id="GO:0031965">
    <property type="term" value="C:nuclear membrane"/>
    <property type="evidence" value="ECO:0007669"/>
    <property type="project" value="Ensembl"/>
</dbReference>
<dbReference type="GO" id="GO:0005730">
    <property type="term" value="C:nucleolus"/>
    <property type="evidence" value="ECO:0007669"/>
    <property type="project" value="UniProtKB-SubCell"/>
</dbReference>
<dbReference type="GO" id="GO:0005886">
    <property type="term" value="C:plasma membrane"/>
    <property type="evidence" value="ECO:0000318"/>
    <property type="project" value="GO_Central"/>
</dbReference>
<dbReference type="GO" id="GO:0098794">
    <property type="term" value="C:postsynapse"/>
    <property type="evidence" value="ECO:0007669"/>
    <property type="project" value="Ensembl"/>
</dbReference>
<dbReference type="GO" id="GO:0032991">
    <property type="term" value="C:protein-containing complex"/>
    <property type="evidence" value="ECO:0007669"/>
    <property type="project" value="Ensembl"/>
</dbReference>
<dbReference type="GO" id="GO:0003725">
    <property type="term" value="F:double-stranded RNA binding"/>
    <property type="evidence" value="ECO:0000314"/>
    <property type="project" value="MGI"/>
</dbReference>
<dbReference type="GO" id="GO:0030544">
    <property type="term" value="F:Hsp70 protein binding"/>
    <property type="evidence" value="ECO:0007669"/>
    <property type="project" value="Ensembl"/>
</dbReference>
<dbReference type="GO" id="GO:0019894">
    <property type="term" value="F:kinesin binding"/>
    <property type="evidence" value="ECO:0007669"/>
    <property type="project" value="Ensembl"/>
</dbReference>
<dbReference type="GO" id="GO:0051019">
    <property type="term" value="F:mitogen-activated protein kinase binding"/>
    <property type="evidence" value="ECO:0007669"/>
    <property type="project" value="Ensembl"/>
</dbReference>
<dbReference type="GO" id="GO:0003729">
    <property type="term" value="F:mRNA binding"/>
    <property type="evidence" value="ECO:0000318"/>
    <property type="project" value="GO_Central"/>
</dbReference>
<dbReference type="GO" id="GO:0043022">
    <property type="term" value="F:ribosome binding"/>
    <property type="evidence" value="ECO:0007669"/>
    <property type="project" value="Ensembl"/>
</dbReference>
<dbReference type="GO" id="GO:0003723">
    <property type="term" value="F:RNA binding"/>
    <property type="evidence" value="ECO:0007005"/>
    <property type="project" value="UniProtKB"/>
</dbReference>
<dbReference type="GO" id="GO:0098964">
    <property type="term" value="P:anterograde dendritic transport of messenger ribonucleoprotein complex"/>
    <property type="evidence" value="ECO:0000318"/>
    <property type="project" value="GO_Central"/>
</dbReference>
<dbReference type="GO" id="GO:0034599">
    <property type="term" value="P:cellular response to oxidative stress"/>
    <property type="evidence" value="ECO:0007669"/>
    <property type="project" value="Ensembl"/>
</dbReference>
<dbReference type="GO" id="GO:0048592">
    <property type="term" value="P:eye morphogenesis"/>
    <property type="evidence" value="ECO:0007669"/>
    <property type="project" value="Ensembl"/>
</dbReference>
<dbReference type="GO" id="GO:0007281">
    <property type="term" value="P:germ cell development"/>
    <property type="evidence" value="ECO:0000318"/>
    <property type="project" value="GO_Central"/>
</dbReference>
<dbReference type="GO" id="GO:0008298">
    <property type="term" value="P:intracellular mRNA localization"/>
    <property type="evidence" value="ECO:0000318"/>
    <property type="project" value="GO_Central"/>
</dbReference>
<dbReference type="GO" id="GO:0061003">
    <property type="term" value="P:positive regulation of dendritic spine morphogenesis"/>
    <property type="evidence" value="ECO:0007669"/>
    <property type="project" value="Ensembl"/>
</dbReference>
<dbReference type="GO" id="GO:1900454">
    <property type="term" value="P:positive regulation of long-term synaptic depression"/>
    <property type="evidence" value="ECO:0007669"/>
    <property type="project" value="Ensembl"/>
</dbReference>
<dbReference type="GO" id="GO:0051965">
    <property type="term" value="P:positive regulation of synapse assembly"/>
    <property type="evidence" value="ECO:0007669"/>
    <property type="project" value="Ensembl"/>
</dbReference>
<dbReference type="GO" id="GO:0035418">
    <property type="term" value="P:protein localization to synapse"/>
    <property type="evidence" value="ECO:0000318"/>
    <property type="project" value="GO_Central"/>
</dbReference>
<dbReference type="GO" id="GO:0032956">
    <property type="term" value="P:regulation of actin cytoskeleton organization"/>
    <property type="evidence" value="ECO:0007669"/>
    <property type="project" value="Ensembl"/>
</dbReference>
<dbReference type="GO" id="GO:0051489">
    <property type="term" value="P:regulation of filopodium assembly"/>
    <property type="evidence" value="ECO:0007669"/>
    <property type="project" value="Ensembl"/>
</dbReference>
<dbReference type="CDD" id="cd19882">
    <property type="entry name" value="DSRM_STAU2_rpt2"/>
    <property type="match status" value="1"/>
</dbReference>
<dbReference type="CDD" id="cd19884">
    <property type="entry name" value="DSRM_STAU2_rpt3"/>
    <property type="match status" value="1"/>
</dbReference>
<dbReference type="CDD" id="cd19886">
    <property type="entry name" value="DSRM_STAU2_rpt4"/>
    <property type="match status" value="1"/>
</dbReference>
<dbReference type="FunFam" id="3.30.160.20:FF:000007">
    <property type="entry name" value="Double-stranded RNA-binding protein Staufen homolog 1"/>
    <property type="match status" value="1"/>
</dbReference>
<dbReference type="FunFam" id="3.30.160.20:FF:000024">
    <property type="entry name" value="double-stranded RNA-binding protein Staufen homolog 1 isoform X1"/>
    <property type="match status" value="1"/>
</dbReference>
<dbReference type="FunFam" id="3.30.160.20:FF:000057">
    <property type="entry name" value="Double-stranded RNA-binding protein Staufen homolog 2"/>
    <property type="match status" value="1"/>
</dbReference>
<dbReference type="FunFam" id="3.30.160.20:FF:000013">
    <property type="entry name" value="double-stranded RNA-binding protein Staufen homolog 2 isoform X3"/>
    <property type="match status" value="1"/>
</dbReference>
<dbReference type="Gene3D" id="3.30.160.20">
    <property type="match status" value="4"/>
</dbReference>
<dbReference type="InterPro" id="IPR051740">
    <property type="entry name" value="DRBM-containing_protein"/>
</dbReference>
<dbReference type="InterPro" id="IPR014720">
    <property type="entry name" value="dsRBD_dom"/>
</dbReference>
<dbReference type="InterPro" id="IPR044464">
    <property type="entry name" value="STAU2_DSRM_2"/>
</dbReference>
<dbReference type="InterPro" id="IPR044473">
    <property type="entry name" value="STAU2_DSRM_3"/>
</dbReference>
<dbReference type="InterPro" id="IPR044474">
    <property type="entry name" value="STAU2_DSRM_4"/>
</dbReference>
<dbReference type="InterPro" id="IPR032478">
    <property type="entry name" value="Staufen_C"/>
</dbReference>
<dbReference type="PANTHER" id="PTHR46054:SF1">
    <property type="entry name" value="DOUBLE-STRANDED RNA-BINDING PROTEIN STAUFEN HOMOLOG 2"/>
    <property type="match status" value="1"/>
</dbReference>
<dbReference type="PANTHER" id="PTHR46054">
    <property type="entry name" value="MATERNAL EFFECT PROTEIN STAUFEN"/>
    <property type="match status" value="1"/>
</dbReference>
<dbReference type="Pfam" id="PF00035">
    <property type="entry name" value="dsrm"/>
    <property type="match status" value="4"/>
</dbReference>
<dbReference type="Pfam" id="PF16482">
    <property type="entry name" value="Staufen_C"/>
    <property type="match status" value="1"/>
</dbReference>
<dbReference type="SMART" id="SM00358">
    <property type="entry name" value="DSRM"/>
    <property type="match status" value="4"/>
</dbReference>
<dbReference type="SUPFAM" id="SSF54768">
    <property type="entry name" value="dsRNA-binding domain-like"/>
    <property type="match status" value="4"/>
</dbReference>
<dbReference type="PROSITE" id="PS50137">
    <property type="entry name" value="DS_RBD"/>
    <property type="match status" value="4"/>
</dbReference>
<feature type="chain" id="PRO_0000072246" description="Double-stranded RNA-binding protein Staufen homolog 2">
    <location>
        <begin position="1"/>
        <end position="570"/>
    </location>
</feature>
<feature type="domain" description="DRBM 1" evidence="3">
    <location>
        <begin position="8"/>
        <end position="75"/>
    </location>
</feature>
<feature type="domain" description="DRBM 2" evidence="3">
    <location>
        <begin position="95"/>
        <end position="181"/>
    </location>
</feature>
<feature type="domain" description="DRBM 3" evidence="3">
    <location>
        <begin position="207"/>
        <end position="274"/>
    </location>
</feature>
<feature type="domain" description="DRBM 4" evidence="3">
    <location>
        <begin position="307"/>
        <end position="375"/>
    </location>
</feature>
<feature type="region of interest" description="Disordered" evidence="4">
    <location>
        <begin position="71"/>
        <end position="94"/>
    </location>
</feature>
<feature type="region of interest" description="Disordered" evidence="4">
    <location>
        <begin position="181"/>
        <end position="203"/>
    </location>
</feature>
<feature type="region of interest" description="Required for dendritic transport" evidence="1">
    <location>
        <begin position="381"/>
        <end position="570"/>
    </location>
</feature>
<feature type="region of interest" description="Disordered" evidence="4">
    <location>
        <begin position="387"/>
        <end position="409"/>
    </location>
</feature>
<feature type="region of interest" description="Disordered" evidence="4">
    <location>
        <begin position="528"/>
        <end position="570"/>
    </location>
</feature>
<feature type="short sequence motif" description="Nuclear localization signal 1" evidence="1">
    <location>
        <begin position="273"/>
        <end position="291"/>
    </location>
</feature>
<feature type="short sequence motif" description="Nuclear localization signal 2" evidence="1">
    <location>
        <begin position="373"/>
        <end position="412"/>
    </location>
</feature>
<feature type="compositionally biased region" description="Polar residues" evidence="4">
    <location>
        <begin position="83"/>
        <end position="94"/>
    </location>
</feature>
<feature type="compositionally biased region" description="Basic and acidic residues" evidence="4">
    <location>
        <begin position="194"/>
        <end position="203"/>
    </location>
</feature>
<feature type="compositionally biased region" description="Basic and acidic residues" evidence="4">
    <location>
        <begin position="536"/>
        <end position="550"/>
    </location>
</feature>
<feature type="modified residue" description="Phosphoserine" evidence="21 24">
    <location>
        <position position="188"/>
    </location>
</feature>
<feature type="modified residue" description="Phosphoserine" evidence="23">
    <location>
        <position position="395"/>
    </location>
</feature>
<feature type="modified residue" description="Phosphothreonine" evidence="23">
    <location>
        <position position="405"/>
    </location>
</feature>
<feature type="modified residue" description="Phosphoserine" evidence="19 20 21 23 25">
    <location>
        <position position="416"/>
    </location>
</feature>
<feature type="modified residue" description="Phosphoserine" evidence="23">
    <location>
        <position position="426"/>
    </location>
</feature>
<feature type="modified residue" description="Phosphoserine" evidence="18 20 22 23 25">
    <location>
        <position position="440"/>
    </location>
</feature>
<feature type="modified residue" description="Phosphoserine" evidence="20 23 25">
    <location>
        <position position="455"/>
    </location>
</feature>
<feature type="modified residue" description="Phosphoserine" evidence="20 22">
    <location>
        <position position="492"/>
    </location>
</feature>
<feature type="splice variant" id="VSP_015373" description="In isoform 4." evidence="16">
    <location>
        <begin position="1"/>
        <end position="220"/>
    </location>
</feature>
<feature type="splice variant" id="VSP_046138" description="In isoform 6." evidence="14">
    <location>
        <begin position="1"/>
        <end position="172"/>
    </location>
</feature>
<feature type="splice variant" id="VSP_046139" description="In isoform 7." evidence="14">
    <location>
        <begin position="1"/>
        <end position="104"/>
    </location>
</feature>
<feature type="splice variant" id="VSP_015374" description="In isoform 2, isoform 3 and isoform 5." evidence="12 13 15">
    <original>MANPKEKTAMCLVNELARFNRVQPQYKLLNERGPAHSK</original>
    <variation>MLQINQ</variation>
    <location>
        <begin position="1"/>
        <end position="38"/>
    </location>
</feature>
<feature type="splice variant" id="VSP_046140" description="In isoform 8." evidence="14">
    <location>
        <begin position="1"/>
        <end position="38"/>
    </location>
</feature>
<feature type="splice variant" id="VSP_015375" description="In isoform 5." evidence="15">
    <location>
        <begin position="138"/>
        <end position="570"/>
    </location>
</feature>
<feature type="splice variant" id="VSP_046141" description="In isoform 7." evidence="14">
    <original>F</original>
    <variation>FQVHYCDRQSGKECVTCLTLAPVQMTFHAIGSSIEASHD</variation>
    <location>
        <position position="509"/>
    </location>
</feature>
<feature type="splice variant" id="VSP_046142" description="In isoform 8." evidence="14">
    <original>AALSALKQFSEQGLDPIDGAMNIEKGSLEKQAKHLREKADNNQAPPGSIAQDCKKSNSAV</original>
    <variation>V</variation>
    <location>
        <begin position="511"/>
        <end position="570"/>
    </location>
</feature>
<feature type="splice variant" id="VSP_015376" description="In isoform 3 and isoform 4." evidence="12 16">
    <original>A</original>
    <variation>V</variation>
    <location>
        <position position="511"/>
    </location>
</feature>
<feature type="splice variant" id="VSP_015377" description="In isoform 3 and isoform 4." evidence="12 16">
    <location>
        <begin position="512"/>
        <end position="570"/>
    </location>
</feature>
<feature type="sequence variant" id="VAR_023394" description="In dbSNP:rs949493." evidence="5 6 7 8 9">
    <original>V</original>
    <variation>M</variation>
    <location>
        <position position="198"/>
    </location>
</feature>
<feature type="sequence conflict" description="In Ref. 3; BAH11778." evidence="17" ref="3">
    <original>K</original>
    <variation>T</variation>
    <location>
        <position position="345"/>
    </location>
</feature>
<feature type="sequence conflict" description="In Ref. 4; CAH10527." evidence="17" ref="4">
    <original>G</original>
    <variation>D</variation>
    <location>
        <position position="433"/>
    </location>
</feature>